<dbReference type="EMBL" id="CP000789">
    <property type="protein sequence ID" value="ABU72505.1"/>
    <property type="molecule type" value="Genomic_DNA"/>
</dbReference>
<dbReference type="RefSeq" id="WP_012128940.1">
    <property type="nucleotide sequence ID" value="NC_022269.1"/>
</dbReference>
<dbReference type="KEGG" id="vha:VIBHAR_03570"/>
<dbReference type="PATRIC" id="fig|338187.25.peg.2640"/>
<dbReference type="Proteomes" id="UP000008152">
    <property type="component" value="Chromosome I"/>
</dbReference>
<dbReference type="GO" id="GO:0005737">
    <property type="term" value="C:cytoplasm"/>
    <property type="evidence" value="ECO:0007669"/>
    <property type="project" value="UniProtKB-SubCell"/>
</dbReference>
<dbReference type="GO" id="GO:0008270">
    <property type="term" value="F:zinc ion binding"/>
    <property type="evidence" value="ECO:0007669"/>
    <property type="project" value="UniProtKB-UniRule"/>
</dbReference>
<dbReference type="GO" id="GO:0006950">
    <property type="term" value="P:response to stress"/>
    <property type="evidence" value="ECO:0007669"/>
    <property type="project" value="UniProtKB-ARBA"/>
</dbReference>
<dbReference type="HAMAP" id="MF_00746">
    <property type="entry name" value="SprT"/>
    <property type="match status" value="1"/>
</dbReference>
<dbReference type="InterPro" id="IPR006640">
    <property type="entry name" value="SprT-like_domain"/>
</dbReference>
<dbReference type="InterPro" id="IPR035240">
    <property type="entry name" value="SprT_Zn_ribbon"/>
</dbReference>
<dbReference type="InterPro" id="IPR023483">
    <property type="entry name" value="Uncharacterised_SprT"/>
</dbReference>
<dbReference type="NCBIfam" id="NF003421">
    <property type="entry name" value="PRK04860.1"/>
    <property type="match status" value="1"/>
</dbReference>
<dbReference type="PANTHER" id="PTHR38773">
    <property type="entry name" value="PROTEIN SPRT"/>
    <property type="match status" value="1"/>
</dbReference>
<dbReference type="PANTHER" id="PTHR38773:SF1">
    <property type="entry name" value="PROTEIN SPRT"/>
    <property type="match status" value="1"/>
</dbReference>
<dbReference type="Pfam" id="PF10263">
    <property type="entry name" value="SprT-like"/>
    <property type="match status" value="1"/>
</dbReference>
<dbReference type="Pfam" id="PF17283">
    <property type="entry name" value="Zn_ribbon_SprT"/>
    <property type="match status" value="1"/>
</dbReference>
<dbReference type="SMART" id="SM00731">
    <property type="entry name" value="SprT"/>
    <property type="match status" value="1"/>
</dbReference>
<dbReference type="PROSITE" id="PS00142">
    <property type="entry name" value="ZINC_PROTEASE"/>
    <property type="match status" value="1"/>
</dbReference>
<feature type="chain" id="PRO_1000046544" description="Protein SprT">
    <location>
        <begin position="1"/>
        <end position="165"/>
    </location>
</feature>
<feature type="domain" description="SprT-like" evidence="1">
    <location>
        <begin position="21"/>
        <end position="158"/>
    </location>
</feature>
<feature type="active site" evidence="1">
    <location>
        <position position="74"/>
    </location>
</feature>
<feature type="binding site" evidence="1">
    <location>
        <position position="73"/>
    </location>
    <ligand>
        <name>Zn(2+)</name>
        <dbReference type="ChEBI" id="CHEBI:29105"/>
    </ligand>
</feature>
<feature type="binding site" evidence="1">
    <location>
        <position position="77"/>
    </location>
    <ligand>
        <name>Zn(2+)</name>
        <dbReference type="ChEBI" id="CHEBI:29105"/>
    </ligand>
</feature>
<gene>
    <name evidence="1" type="primary">sprT</name>
    <name type="ordered locus">VIBHAR_03570</name>
</gene>
<comment type="cofactor">
    <cofactor evidence="1">
        <name>Zn(2+)</name>
        <dbReference type="ChEBI" id="CHEBI:29105"/>
    </cofactor>
    <text evidence="1">Binds 1 zinc ion.</text>
</comment>
<comment type="subcellular location">
    <subcellularLocation>
        <location evidence="1">Cytoplasm</location>
    </subcellularLocation>
</comment>
<comment type="similarity">
    <text evidence="1">Belongs to the SprT family.</text>
</comment>
<proteinExistence type="inferred from homology"/>
<organism>
    <name type="scientific">Vibrio campbellii (strain ATCC BAA-1116)</name>
    <dbReference type="NCBI Taxonomy" id="2902295"/>
    <lineage>
        <taxon>Bacteria</taxon>
        <taxon>Pseudomonadati</taxon>
        <taxon>Pseudomonadota</taxon>
        <taxon>Gammaproteobacteria</taxon>
        <taxon>Vibrionales</taxon>
        <taxon>Vibrionaceae</taxon>
        <taxon>Vibrio</taxon>
    </lineage>
</organism>
<keyword id="KW-0963">Cytoplasm</keyword>
<keyword id="KW-0479">Metal-binding</keyword>
<keyword id="KW-0862">Zinc</keyword>
<protein>
    <recommendedName>
        <fullName evidence="1">Protein SprT</fullName>
    </recommendedName>
</protein>
<evidence type="ECO:0000255" key="1">
    <source>
        <dbReference type="HAMAP-Rule" id="MF_00746"/>
    </source>
</evidence>
<reference key="1">
    <citation type="submission" date="2007-08" db="EMBL/GenBank/DDBJ databases">
        <authorList>
            <consortium name="The Vibrio harveyi Genome Sequencing Project"/>
            <person name="Bassler B."/>
            <person name="Clifton S.W."/>
            <person name="Fulton L."/>
            <person name="Delehaunty K."/>
            <person name="Fronick C."/>
            <person name="Harrison M."/>
            <person name="Markivic C."/>
            <person name="Fulton R."/>
            <person name="Tin-Wollam A.-M."/>
            <person name="Shah N."/>
            <person name="Pepin K."/>
            <person name="Nash W."/>
            <person name="Thiruvilangam P."/>
            <person name="Bhonagiri V."/>
            <person name="Waters C."/>
            <person name="Tu K.C."/>
            <person name="Irgon J."/>
            <person name="Wilson R.K."/>
        </authorList>
    </citation>
    <scope>NUCLEOTIDE SEQUENCE [LARGE SCALE GENOMIC DNA]</scope>
    <source>
        <strain>ATCC BAA-1116 / BB120</strain>
    </source>
</reference>
<sequence>MDIELSYKAKQVMANCIAMAEQAFKRSFPIPSLTFNVRGKAAGKAYLQLNEIRLNPKLFKENPQAFLKEVIPHEVAHLIAYQVYGRVRPHGKEWQGVMEAVFKVPAKTTHSFDVASVQGKTFEYRCGCMTYPLSIRRHNKVLRKEAVYSCQKCRQPLSFTGTQLS</sequence>
<accession>A7MTP2</accession>
<name>SPRT_VIBC1</name>